<evidence type="ECO:0000250" key="1">
    <source>
        <dbReference type="UniProtKB" id="P52701"/>
    </source>
</evidence>
<evidence type="ECO:0000250" key="2">
    <source>
        <dbReference type="UniProtKB" id="P54276"/>
    </source>
</evidence>
<evidence type="ECO:0000255" key="3"/>
<evidence type="ECO:0000255" key="4">
    <source>
        <dbReference type="PROSITE-ProRule" id="PRU00162"/>
    </source>
</evidence>
<evidence type="ECO:0000256" key="5">
    <source>
        <dbReference type="SAM" id="MobiDB-lite"/>
    </source>
</evidence>
<evidence type="ECO:0000269" key="6">
    <source>
    </source>
</evidence>
<evidence type="ECO:0000305" key="7"/>
<dbReference type="EMBL" id="AADN03003073">
    <property type="status" value="NOT_ANNOTATED_CDS"/>
    <property type="molecule type" value="Genomic_DNA"/>
</dbReference>
<dbReference type="SMR" id="E1BYJ2"/>
<dbReference type="FunCoup" id="E1BYJ2">
    <property type="interactions" value="1637"/>
</dbReference>
<dbReference type="STRING" id="9031.ENSGALP00000038835"/>
<dbReference type="PaxDb" id="9031-ENSGALP00000038835"/>
<dbReference type="VEuPathDB" id="HostDB:geneid_421291"/>
<dbReference type="eggNOG" id="KOG0217">
    <property type="taxonomic scope" value="Eukaryota"/>
</dbReference>
<dbReference type="HOGENOM" id="CLU_002472_1_3_1"/>
<dbReference type="InParanoid" id="E1BYJ2"/>
<dbReference type="OrthoDB" id="10252754at2759"/>
<dbReference type="Proteomes" id="UP000000539">
    <property type="component" value="Unassembled WGS sequence"/>
</dbReference>
<dbReference type="GO" id="GO:0032301">
    <property type="term" value="C:MutSalpha complex"/>
    <property type="evidence" value="ECO:0000318"/>
    <property type="project" value="GO_Central"/>
</dbReference>
<dbReference type="GO" id="GO:0005634">
    <property type="term" value="C:nucleus"/>
    <property type="evidence" value="ECO:0000318"/>
    <property type="project" value="GO_Central"/>
</dbReference>
<dbReference type="GO" id="GO:0005524">
    <property type="term" value="F:ATP binding"/>
    <property type="evidence" value="ECO:0007669"/>
    <property type="project" value="UniProtKB-KW"/>
</dbReference>
<dbReference type="GO" id="GO:0140664">
    <property type="term" value="F:ATP-dependent DNA damage sensor activity"/>
    <property type="evidence" value="ECO:0007669"/>
    <property type="project" value="InterPro"/>
</dbReference>
<dbReference type="GO" id="GO:0030983">
    <property type="term" value="F:mismatched DNA binding"/>
    <property type="evidence" value="ECO:0000318"/>
    <property type="project" value="GO_Central"/>
</dbReference>
<dbReference type="GO" id="GO:0006298">
    <property type="term" value="P:mismatch repair"/>
    <property type="evidence" value="ECO:0000318"/>
    <property type="project" value="GO_Central"/>
</dbReference>
<dbReference type="GO" id="GO:0007095">
    <property type="term" value="P:mitotic G2 DNA damage checkpoint signaling"/>
    <property type="evidence" value="ECO:0000315"/>
    <property type="project" value="UniProtKB"/>
</dbReference>
<dbReference type="GO" id="GO:0032876">
    <property type="term" value="P:negative regulation of DNA endoreduplication"/>
    <property type="evidence" value="ECO:0000315"/>
    <property type="project" value="UniProtKB"/>
</dbReference>
<dbReference type="GO" id="GO:0030890">
    <property type="term" value="P:positive regulation of B cell proliferation"/>
    <property type="evidence" value="ECO:0000315"/>
    <property type="project" value="UniProtKB"/>
</dbReference>
<dbReference type="CDD" id="cd03286">
    <property type="entry name" value="ABC_MSH6_euk"/>
    <property type="match status" value="1"/>
</dbReference>
<dbReference type="CDD" id="cd05837">
    <property type="entry name" value="PWWP_MSH6"/>
    <property type="match status" value="1"/>
</dbReference>
<dbReference type="FunFam" id="1.10.1420.10:FF:000005">
    <property type="entry name" value="DNA mismatch repair protein"/>
    <property type="match status" value="1"/>
</dbReference>
<dbReference type="FunFam" id="1.10.1420.10:FF:000006">
    <property type="entry name" value="DNA mismatch repair protein"/>
    <property type="match status" value="1"/>
</dbReference>
<dbReference type="FunFam" id="3.30.420.110:FF:000004">
    <property type="entry name" value="DNA mismatch repair protein"/>
    <property type="match status" value="1"/>
</dbReference>
<dbReference type="FunFam" id="3.40.1170.10:FF:000002">
    <property type="entry name" value="DNA mismatch repair protein"/>
    <property type="match status" value="1"/>
</dbReference>
<dbReference type="FunFam" id="3.40.50.300:FF:000645">
    <property type="entry name" value="DNA mismatch repair protein"/>
    <property type="match status" value="1"/>
</dbReference>
<dbReference type="Gene3D" id="1.10.1420.10">
    <property type="match status" value="2"/>
</dbReference>
<dbReference type="Gene3D" id="2.30.30.140">
    <property type="match status" value="1"/>
</dbReference>
<dbReference type="Gene3D" id="3.40.1170.10">
    <property type="entry name" value="DNA repair protein MutS, domain I"/>
    <property type="match status" value="1"/>
</dbReference>
<dbReference type="Gene3D" id="3.30.420.110">
    <property type="entry name" value="MutS, connector domain"/>
    <property type="match status" value="1"/>
</dbReference>
<dbReference type="Gene3D" id="3.40.50.300">
    <property type="entry name" value="P-loop containing nucleotide triphosphate hydrolases"/>
    <property type="match status" value="1"/>
</dbReference>
<dbReference type="InterPro" id="IPR007695">
    <property type="entry name" value="DNA_mismatch_repair_MutS-lik_N"/>
</dbReference>
<dbReference type="InterPro" id="IPR017261">
    <property type="entry name" value="DNA_mismatch_repair_MutS/MSH"/>
</dbReference>
<dbReference type="InterPro" id="IPR000432">
    <property type="entry name" value="DNA_mismatch_repair_MutS_C"/>
</dbReference>
<dbReference type="InterPro" id="IPR007861">
    <property type="entry name" value="DNA_mismatch_repair_MutS_clamp"/>
</dbReference>
<dbReference type="InterPro" id="IPR007696">
    <property type="entry name" value="DNA_mismatch_repair_MutS_core"/>
</dbReference>
<dbReference type="InterPro" id="IPR016151">
    <property type="entry name" value="DNA_mismatch_repair_MutS_N"/>
</dbReference>
<dbReference type="InterPro" id="IPR036187">
    <property type="entry name" value="DNA_mismatch_repair_MutS_sf"/>
</dbReference>
<dbReference type="InterPro" id="IPR007860">
    <property type="entry name" value="DNA_mmatch_repair_MutS_con_dom"/>
</dbReference>
<dbReference type="InterPro" id="IPR045076">
    <property type="entry name" value="MutS"/>
</dbReference>
<dbReference type="InterPro" id="IPR036678">
    <property type="entry name" value="MutS_con_dom_sf"/>
</dbReference>
<dbReference type="InterPro" id="IPR027417">
    <property type="entry name" value="P-loop_NTPase"/>
</dbReference>
<dbReference type="InterPro" id="IPR000313">
    <property type="entry name" value="PWWP_dom"/>
</dbReference>
<dbReference type="NCBIfam" id="NF003810">
    <property type="entry name" value="PRK05399.1"/>
    <property type="match status" value="1"/>
</dbReference>
<dbReference type="PANTHER" id="PTHR11361:SF148">
    <property type="entry name" value="DNA MISMATCH REPAIR PROTEIN MSH6"/>
    <property type="match status" value="1"/>
</dbReference>
<dbReference type="PANTHER" id="PTHR11361">
    <property type="entry name" value="DNA MISMATCH REPAIR PROTEIN MUTS FAMILY MEMBER"/>
    <property type="match status" value="1"/>
</dbReference>
<dbReference type="Pfam" id="PF01624">
    <property type="entry name" value="MutS_I"/>
    <property type="match status" value="1"/>
</dbReference>
<dbReference type="Pfam" id="PF05188">
    <property type="entry name" value="MutS_II"/>
    <property type="match status" value="1"/>
</dbReference>
<dbReference type="Pfam" id="PF05192">
    <property type="entry name" value="MutS_III"/>
    <property type="match status" value="1"/>
</dbReference>
<dbReference type="Pfam" id="PF05190">
    <property type="entry name" value="MutS_IV"/>
    <property type="match status" value="1"/>
</dbReference>
<dbReference type="Pfam" id="PF00488">
    <property type="entry name" value="MutS_V"/>
    <property type="match status" value="1"/>
</dbReference>
<dbReference type="Pfam" id="PF00855">
    <property type="entry name" value="PWWP"/>
    <property type="match status" value="1"/>
</dbReference>
<dbReference type="PIRSF" id="PIRSF037677">
    <property type="entry name" value="DNA_mis_repair_Msh6"/>
    <property type="match status" value="1"/>
</dbReference>
<dbReference type="SMART" id="SM00534">
    <property type="entry name" value="MUTSac"/>
    <property type="match status" value="1"/>
</dbReference>
<dbReference type="SMART" id="SM00533">
    <property type="entry name" value="MUTSd"/>
    <property type="match status" value="1"/>
</dbReference>
<dbReference type="SMART" id="SM00293">
    <property type="entry name" value="PWWP"/>
    <property type="match status" value="1"/>
</dbReference>
<dbReference type="SUPFAM" id="SSF55271">
    <property type="entry name" value="DNA repair protein MutS, domain I"/>
    <property type="match status" value="1"/>
</dbReference>
<dbReference type="SUPFAM" id="SSF53150">
    <property type="entry name" value="DNA repair protein MutS, domain II"/>
    <property type="match status" value="1"/>
</dbReference>
<dbReference type="SUPFAM" id="SSF48334">
    <property type="entry name" value="DNA repair protein MutS, domain III"/>
    <property type="match status" value="1"/>
</dbReference>
<dbReference type="SUPFAM" id="SSF52540">
    <property type="entry name" value="P-loop containing nucleoside triphosphate hydrolases"/>
    <property type="match status" value="1"/>
</dbReference>
<dbReference type="SUPFAM" id="SSF63748">
    <property type="entry name" value="Tudor/PWWP/MBT"/>
    <property type="match status" value="1"/>
</dbReference>
<dbReference type="PROSITE" id="PS00486">
    <property type="entry name" value="DNA_MISMATCH_REPAIR_2"/>
    <property type="match status" value="1"/>
</dbReference>
<dbReference type="PROSITE" id="PS50812">
    <property type="entry name" value="PWWP"/>
    <property type="match status" value="1"/>
</dbReference>
<accession>E1BYJ2</accession>
<protein>
    <recommendedName>
        <fullName evidence="2">DNA mismatch repair protein Msh6</fullName>
    </recommendedName>
</protein>
<reference key="1">
    <citation type="journal article" date="2004" name="Nature">
        <title>Sequence and comparative analysis of the chicken genome provide unique perspectives on vertebrate evolution.</title>
        <authorList>
            <person name="Hillier L.W."/>
            <person name="Miller W."/>
            <person name="Birney E."/>
            <person name="Warren W."/>
            <person name="Hardison R.C."/>
            <person name="Ponting C.P."/>
            <person name="Bork P."/>
            <person name="Burt D.W."/>
            <person name="Groenen M.A.M."/>
            <person name="Delany M.E."/>
            <person name="Dodgson J.B."/>
            <person name="Chinwalla A.T."/>
            <person name="Cliften P.F."/>
            <person name="Clifton S.W."/>
            <person name="Delehaunty K.D."/>
            <person name="Fronick C."/>
            <person name="Fulton R.S."/>
            <person name="Graves T.A."/>
            <person name="Kremitzki C."/>
            <person name="Layman D."/>
            <person name="Magrini V."/>
            <person name="McPherson J.D."/>
            <person name="Miner T.L."/>
            <person name="Minx P."/>
            <person name="Nash W.E."/>
            <person name="Nhan M.N."/>
            <person name="Nelson J.O."/>
            <person name="Oddy L.G."/>
            <person name="Pohl C.S."/>
            <person name="Randall-Maher J."/>
            <person name="Smith S.M."/>
            <person name="Wallis J.W."/>
            <person name="Yang S.-P."/>
            <person name="Romanov M.N."/>
            <person name="Rondelli C.M."/>
            <person name="Paton B."/>
            <person name="Smith J."/>
            <person name="Morrice D."/>
            <person name="Daniels L."/>
            <person name="Tempest H.G."/>
            <person name="Robertson L."/>
            <person name="Masabanda J.S."/>
            <person name="Griffin D.K."/>
            <person name="Vignal A."/>
            <person name="Fillon V."/>
            <person name="Jacobbson L."/>
            <person name="Kerje S."/>
            <person name="Andersson L."/>
            <person name="Crooijmans R.P."/>
            <person name="Aerts J."/>
            <person name="van der Poel J.J."/>
            <person name="Ellegren H."/>
            <person name="Caldwell R.B."/>
            <person name="Hubbard S.J."/>
            <person name="Grafham D.V."/>
            <person name="Kierzek A.M."/>
            <person name="McLaren S.R."/>
            <person name="Overton I.M."/>
            <person name="Arakawa H."/>
            <person name="Beattie K.J."/>
            <person name="Bezzubov Y."/>
            <person name="Boardman P.E."/>
            <person name="Bonfield J.K."/>
            <person name="Croning M.D.R."/>
            <person name="Davies R.M."/>
            <person name="Francis M.D."/>
            <person name="Humphray S.J."/>
            <person name="Scott C.E."/>
            <person name="Taylor R.G."/>
            <person name="Tickle C."/>
            <person name="Brown W.R.A."/>
            <person name="Rogers J."/>
            <person name="Buerstedde J.-M."/>
            <person name="Wilson S.A."/>
            <person name="Stubbs L."/>
            <person name="Ovcharenko I."/>
            <person name="Gordon L."/>
            <person name="Lucas S."/>
            <person name="Miller M.M."/>
            <person name="Inoko H."/>
            <person name="Shiina T."/>
            <person name="Kaufman J."/>
            <person name="Salomonsen J."/>
            <person name="Skjoedt K."/>
            <person name="Wong G.K.-S."/>
            <person name="Wang J."/>
            <person name="Liu B."/>
            <person name="Wang J."/>
            <person name="Yu J."/>
            <person name="Yang H."/>
            <person name="Nefedov M."/>
            <person name="Koriabine M."/>
            <person name="Dejong P.J."/>
            <person name="Goodstadt L."/>
            <person name="Webber C."/>
            <person name="Dickens N.J."/>
            <person name="Letunic I."/>
            <person name="Suyama M."/>
            <person name="Torrents D."/>
            <person name="von Mering C."/>
            <person name="Zdobnov E.M."/>
            <person name="Makova K."/>
            <person name="Nekrutenko A."/>
            <person name="Elnitski L."/>
            <person name="Eswara P."/>
            <person name="King D.C."/>
            <person name="Yang S.-P."/>
            <person name="Tyekucheva S."/>
            <person name="Radakrishnan A."/>
            <person name="Harris R.S."/>
            <person name="Chiaromonte F."/>
            <person name="Taylor J."/>
            <person name="He J."/>
            <person name="Rijnkels M."/>
            <person name="Griffiths-Jones S."/>
            <person name="Ureta-Vidal A."/>
            <person name="Hoffman M.M."/>
            <person name="Severin J."/>
            <person name="Searle S.M.J."/>
            <person name="Law A.S."/>
            <person name="Speed D."/>
            <person name="Waddington D."/>
            <person name="Cheng Z."/>
            <person name="Tuzun E."/>
            <person name="Eichler E."/>
            <person name="Bao Z."/>
            <person name="Flicek P."/>
            <person name="Shteynberg D.D."/>
            <person name="Brent M.R."/>
            <person name="Bye J.M."/>
            <person name="Huckle E.J."/>
            <person name="Chatterji S."/>
            <person name="Dewey C."/>
            <person name="Pachter L."/>
            <person name="Kouranov A."/>
            <person name="Mourelatos Z."/>
            <person name="Hatzigeorgiou A.G."/>
            <person name="Paterson A.H."/>
            <person name="Ivarie R."/>
            <person name="Brandstrom M."/>
            <person name="Axelsson E."/>
            <person name="Backstrom N."/>
            <person name="Berlin S."/>
            <person name="Webster M.T."/>
            <person name="Pourquie O."/>
            <person name="Reymond A."/>
            <person name="Ucla C."/>
            <person name="Antonarakis S.E."/>
            <person name="Long M."/>
            <person name="Emerson J.J."/>
            <person name="Betran E."/>
            <person name="Dupanloup I."/>
            <person name="Kaessmann H."/>
            <person name="Hinrichs A.S."/>
            <person name="Bejerano G."/>
            <person name="Furey T.S."/>
            <person name="Harte R.A."/>
            <person name="Raney B."/>
            <person name="Siepel A."/>
            <person name="Kent W.J."/>
            <person name="Haussler D."/>
            <person name="Eyras E."/>
            <person name="Castelo R."/>
            <person name="Abril J.F."/>
            <person name="Castellano S."/>
            <person name="Camara F."/>
            <person name="Parra G."/>
            <person name="Guigo R."/>
            <person name="Bourque G."/>
            <person name="Tesler G."/>
            <person name="Pevzner P.A."/>
            <person name="Smit A."/>
            <person name="Fulton L.A."/>
            <person name="Mardis E.R."/>
            <person name="Wilson R.K."/>
        </authorList>
    </citation>
    <scope>NUCLEOTIDE SEQUENCE [LARGE SCALE GENOMIC DNA]</scope>
    <source>
        <strain>Red jungle fowl</strain>
    </source>
</reference>
<reference key="2">
    <citation type="journal article" date="2013" name="Nucleic Acids Res.">
        <title>MSH6- or PMS2-deficiency causes re-replication in DT40 B cells, but it has little effect on immunoglobulin gene conversion or on repair of AID-generated uracils.</title>
        <authorList>
            <person name="Campo V.A."/>
            <person name="Patenaude A.M."/>
            <person name="Kaden S."/>
            <person name="Horb L."/>
            <person name="Firka D."/>
            <person name="Jiricny J."/>
            <person name="Di Noia J.M."/>
        </authorList>
    </citation>
    <scope>FUNCTION</scope>
</reference>
<feature type="chain" id="PRO_0000436927" description="DNA mismatch repair protein Msh6">
    <location>
        <begin position="1"/>
        <end position="1337"/>
    </location>
</feature>
<feature type="domain" description="PWWP" evidence="4">
    <location>
        <begin position="68"/>
        <end position="130"/>
    </location>
</feature>
<feature type="region of interest" description="Disordered" evidence="5">
    <location>
        <begin position="170"/>
        <end position="310"/>
    </location>
</feature>
<feature type="compositionally biased region" description="Acidic residues" evidence="5">
    <location>
        <begin position="176"/>
        <end position="187"/>
    </location>
</feature>
<feature type="compositionally biased region" description="Basic and acidic residues" evidence="5">
    <location>
        <begin position="226"/>
        <end position="248"/>
    </location>
</feature>
<feature type="compositionally biased region" description="Acidic residues" evidence="5">
    <location>
        <begin position="257"/>
        <end position="272"/>
    </location>
</feature>
<feature type="compositionally biased region" description="Basic residues" evidence="5">
    <location>
        <begin position="279"/>
        <end position="292"/>
    </location>
</feature>
<feature type="compositionally biased region" description="Basic and acidic residues" evidence="5">
    <location>
        <begin position="294"/>
        <end position="305"/>
    </location>
</feature>
<feature type="binding site" evidence="3">
    <location>
        <begin position="1111"/>
        <end position="1118"/>
    </location>
    <ligand>
        <name>ATP</name>
        <dbReference type="ChEBI" id="CHEBI:30616"/>
    </ligand>
</feature>
<sequence>MMSASNLSVIHEVLLVLLNHQRINLPYENLEASLSRMLFLSSFVQEVVQVPIPCNVSANRSVSGVYSPGDLVWAKMEGYPWWPCLIYNHPTEGTIVRGKGSSARIHVQFFDVSPTRGWVSIKYLRPYKGSSDREVLKGGMFYSMKPEIKKAMELADDAMSKDKTKRLELAVCSEPSDTEEAEEEEMEQMSGSASGDSDDSNSEEDVKGNKRVPNRGSAIKAKRRRVLDSDSDRDGSDVEFKPDVKEASSEEASSGVDENEATDVETDEESIEESPIKVPSKRKRGNVSKPSKRSSLENEHSEAPKRAAPVSLEAKSKLTLFAAPENFESQANACSGGTNGFAAWEHEKLEWLQEGKKKDAHRRRQNHPDYDPCTLYVPEDYLNKCTPGMRRWWQLKSQNFDAVICYKVGKFYELYHMDAVTGVNELGLIFMKGSWAHSGFPETAFGRFSAILVQKGYKIARVEQTETPEMMEARCKATAHTTKFDKVVRREICRIITKGTQTYSIIDCDPTENHNKYLLCVKEKEDSSGQRVYGVCFVDTSVGKFYVGQFSDDRHCSRFRTLVAHYTPVQVLFEKGNLTVDTQKILKGSLISCIQEGLISGSQFWSASKTLKVLLEEEYFKENQNTESGCVLPSVIKSLTSESDSLGLTPGENSELALSALGGIVFYLKKCLIDQELLSLANFEKYIPVDADNAKTVSSSNFFARTDRRMVLDGVTLMNLEVLQNGTNGTTEGTLLERIDSCCTPFGKRLLKQWLCAPLCNPTSINDRLDAVEDLLAVPAKLTEITEHLKKLPDLERLLSKIHSIGSPLKSQNHPDSRAIFYEEIKYSKKKIADFLSALEGFKVMNEIVDAMEEVASDFKSQVLKQLVTRKAKHPDGRFPDLSAELKRWDTAFDHNQARKTGVITPKAGFDPDYDKALQDIKTVEEDFRTYLDKQRKLLGLKSVLYWGTGKNRYQMEIPETATSRNLPEEYELKSTRKGYKRYWTKEIEKMLAELINAEERRDAALKDCMRRLFYNFDKNSQDWQTAVQCIAVLDVLMSLANYSQDGDGPLCRPVILLPVDSAPPFLELKNARHPCITKTFFGDDFIPNDIVIGSKDEDGGSEASCVLVTGPNMGGKSTLMRQAGLLVIMAQLGCYVPAEVCRLTPIDRVFTRLGASDRIMSGESTFFVELSETSSILQHATEHSLVLVDELGRGTATFDGTAIASAVVRELAENIKCRTLFSTHYHSLVEDYSGSAAVRLGHMACMVENESEDPSQETITFLYKFIEGACPKSYGFNAARLADIPEEIIQKGHRKAKEFEKKTMSLRIFRFLCRVVDGVTHDANAVGKLTTMLSHL</sequence>
<comment type="function">
    <text evidence="6">Component of the post-replicative DNA mismatch repair system (MMR). Involved in B cell growth by positively regulating B cell proliferation and controlling replication efficiency. Controls cell cycle to prevent re-replication and defects in DNA damage-induced G2 checkpoint. Doesn't seem to counteract or control the immunoglobulin gene conversion (Ig GC) and to contribute to guanine/uracil mismatch repair.</text>
</comment>
<comment type="subcellular location">
    <subcellularLocation>
        <location evidence="1">Nucleus</location>
    </subcellularLocation>
</comment>
<comment type="similarity">
    <text evidence="7">Belongs to the DNA mismatch repair MutS family.</text>
</comment>
<name>MSH6_CHICK</name>
<organism>
    <name type="scientific">Gallus gallus</name>
    <name type="common">Chicken</name>
    <dbReference type="NCBI Taxonomy" id="9031"/>
    <lineage>
        <taxon>Eukaryota</taxon>
        <taxon>Metazoa</taxon>
        <taxon>Chordata</taxon>
        <taxon>Craniata</taxon>
        <taxon>Vertebrata</taxon>
        <taxon>Euteleostomi</taxon>
        <taxon>Archelosauria</taxon>
        <taxon>Archosauria</taxon>
        <taxon>Dinosauria</taxon>
        <taxon>Saurischia</taxon>
        <taxon>Theropoda</taxon>
        <taxon>Coelurosauria</taxon>
        <taxon>Aves</taxon>
        <taxon>Neognathae</taxon>
        <taxon>Galloanserae</taxon>
        <taxon>Galliformes</taxon>
        <taxon>Phasianidae</taxon>
        <taxon>Phasianinae</taxon>
        <taxon>Gallus</taxon>
    </lineage>
</organism>
<gene>
    <name evidence="1" type="primary">MSH6</name>
</gene>
<keyword id="KW-0067">ATP-binding</keyword>
<keyword id="KW-0227">DNA damage</keyword>
<keyword id="KW-0238">DNA-binding</keyword>
<keyword id="KW-0547">Nucleotide-binding</keyword>
<keyword id="KW-0539">Nucleus</keyword>
<keyword id="KW-1185">Reference proteome</keyword>
<proteinExistence type="inferred from homology"/>